<accession>Q67ES9</accession>
<feature type="chain" id="PRO_0000248249" description="Taste receptor type 2 member 104">
    <location>
        <begin position="1"/>
        <end position="302"/>
    </location>
</feature>
<feature type="topological domain" description="Extracellular" evidence="2">
    <location>
        <begin position="1"/>
        <end position="7"/>
    </location>
</feature>
<feature type="transmembrane region" description="Helical; Name=1" evidence="2">
    <location>
        <begin position="8"/>
        <end position="28"/>
    </location>
</feature>
<feature type="topological domain" description="Cytoplasmic" evidence="2">
    <location>
        <begin position="29"/>
        <end position="43"/>
    </location>
</feature>
<feature type="transmembrane region" description="Helical; Name=2" evidence="2">
    <location>
        <begin position="44"/>
        <end position="64"/>
    </location>
</feature>
<feature type="topological domain" description="Extracellular" evidence="2">
    <location>
        <begin position="65"/>
        <end position="87"/>
    </location>
</feature>
<feature type="transmembrane region" description="Helical; Name=3" evidence="2">
    <location>
        <begin position="88"/>
        <end position="108"/>
    </location>
</feature>
<feature type="topological domain" description="Cytoplasmic" evidence="2">
    <location>
        <begin position="109"/>
        <end position="128"/>
    </location>
</feature>
<feature type="transmembrane region" description="Helical; Name=4" evidence="2">
    <location>
        <begin position="129"/>
        <end position="149"/>
    </location>
</feature>
<feature type="topological domain" description="Extracellular" evidence="2">
    <location>
        <begin position="150"/>
        <end position="182"/>
    </location>
</feature>
<feature type="transmembrane region" description="Helical; Name=5" evidence="2">
    <location>
        <begin position="183"/>
        <end position="203"/>
    </location>
</feature>
<feature type="topological domain" description="Cytoplasmic" evidence="2">
    <location>
        <begin position="204"/>
        <end position="233"/>
    </location>
</feature>
<feature type="transmembrane region" description="Helical; Name=6" evidence="2">
    <location>
        <begin position="234"/>
        <end position="254"/>
    </location>
</feature>
<feature type="topological domain" description="Extracellular" evidence="2">
    <location>
        <begin position="255"/>
        <end position="257"/>
    </location>
</feature>
<feature type="transmembrane region" description="Helical; Name=7" evidence="2">
    <location>
        <begin position="258"/>
        <end position="278"/>
    </location>
</feature>
<feature type="topological domain" description="Cytoplasmic" evidence="2">
    <location>
        <begin position="279"/>
        <end position="302"/>
    </location>
</feature>
<feature type="glycosylation site" description="N-linked (GlcNAc...) asparagine" evidence="2">
    <location>
        <position position="160"/>
    </location>
</feature>
<feature type="glycosylation site" description="N-linked (GlcNAc...) asparagine" evidence="2">
    <location>
        <position position="161"/>
    </location>
</feature>
<evidence type="ECO:0000250" key="1">
    <source>
        <dbReference type="UniProtKB" id="Q7M723"/>
    </source>
</evidence>
<evidence type="ECO:0000255" key="2"/>
<evidence type="ECO:0000305" key="3"/>
<evidence type="ECO:0000312" key="4">
    <source>
        <dbReference type="EMBL" id="AAR13350.1"/>
    </source>
</evidence>
<name>TR104_RAT</name>
<organism>
    <name type="scientific">Rattus norvegicus</name>
    <name type="common">Rat</name>
    <dbReference type="NCBI Taxonomy" id="10116"/>
    <lineage>
        <taxon>Eukaryota</taxon>
        <taxon>Metazoa</taxon>
        <taxon>Chordata</taxon>
        <taxon>Craniata</taxon>
        <taxon>Vertebrata</taxon>
        <taxon>Euteleostomi</taxon>
        <taxon>Mammalia</taxon>
        <taxon>Eutheria</taxon>
        <taxon>Euarchontoglires</taxon>
        <taxon>Glires</taxon>
        <taxon>Rodentia</taxon>
        <taxon>Myomorpha</taxon>
        <taxon>Muroidea</taxon>
        <taxon>Muridae</taxon>
        <taxon>Murinae</taxon>
        <taxon>Rattus</taxon>
    </lineage>
</organism>
<comment type="function">
    <text evidence="3">Putative taste receptor which may play a role in the perception of bitterness.</text>
</comment>
<comment type="subcellular location">
    <subcellularLocation>
        <location evidence="3">Membrane</location>
        <topology evidence="3">Multi-pass membrane protein</topology>
    </subcellularLocation>
</comment>
<comment type="miscellaneous">
    <text evidence="3">Several bitter taste receptors are expressed in a single taste receptor cell.</text>
</comment>
<comment type="similarity">
    <text evidence="2">Belongs to the G-protein coupled receptor T2R family.</text>
</comment>
<sequence length="302" mass="35103">MLSMLESILLSVATSEAMLGILGNIFIVLVNCTNWVRNKKLSKINFILTGLAISRVFTIWIITLDAYTKVFFLTTLMPSNLHECISYIWVIINHLSVWFATSLSIFYFLKIANFSHYIFLWLKRRADKVFVFLIGYLIITWLASFPLAVTVIKNIKVHHNNTSWLIQLEKRELLINYVFANMGPISLFMVAVFTCFLLTISLWRHRRRMQSTGSKFRDLNTEVHVKAMKVLISFIILFILYFMGVLIETLCLFLTENILLFIFGFTLSSTYPCCHSFILILTSRELKQASMRALQRLKCCET</sequence>
<protein>
    <recommendedName>
        <fullName>Taste receptor type 2 member 104</fullName>
        <shortName>T2R104</shortName>
    </recommendedName>
    <alternativeName>
        <fullName>Taste receptor type 2 member 21</fullName>
        <shortName>T2R21</shortName>
    </alternativeName>
</protein>
<keyword id="KW-0297">G-protein coupled receptor</keyword>
<keyword id="KW-0325">Glycoprotein</keyword>
<keyword id="KW-0472">Membrane</keyword>
<keyword id="KW-0675">Receptor</keyword>
<keyword id="KW-1185">Reference proteome</keyword>
<keyword id="KW-0716">Sensory transduction</keyword>
<keyword id="KW-0919">Taste</keyword>
<keyword id="KW-0807">Transducer</keyword>
<keyword id="KW-0812">Transmembrane</keyword>
<keyword id="KW-1133">Transmembrane helix</keyword>
<gene>
    <name evidence="1" type="primary">Tas2r104</name>
    <name type="synonym">Tas2r21</name>
</gene>
<proteinExistence type="inferred from homology"/>
<reference evidence="4" key="1">
    <citation type="submission" date="2003-08" db="EMBL/GenBank/DDBJ databases">
        <title>Identification of new putative rat taste receptors belonging to the T2R family.</title>
        <authorList>
            <person name="Conte C."/>
            <person name="Ebeling M."/>
            <person name="Marcuz A."/>
            <person name="Andres-Barquin P.J."/>
        </authorList>
    </citation>
    <scope>NUCLEOTIDE SEQUENCE [GENOMIC DNA]</scope>
    <source>
        <strain evidence="4">Sprague-Dawley</strain>
    </source>
</reference>
<dbReference type="EMBL" id="AY362741">
    <property type="protein sequence ID" value="AAR13350.1"/>
    <property type="molecule type" value="Genomic_DNA"/>
</dbReference>
<dbReference type="RefSeq" id="NP_001160153.1">
    <property type="nucleotide sequence ID" value="NM_001166681.1"/>
</dbReference>
<dbReference type="SMR" id="Q67ES9"/>
<dbReference type="FunCoup" id="Q67ES9">
    <property type="interactions" value="80"/>
</dbReference>
<dbReference type="STRING" id="10116.ENSRNOP00000040435"/>
<dbReference type="GlyCosmos" id="Q67ES9">
    <property type="glycosylation" value="2 sites, No reported glycans"/>
</dbReference>
<dbReference type="GlyGen" id="Q67ES9">
    <property type="glycosylation" value="2 sites"/>
</dbReference>
<dbReference type="PaxDb" id="10116-ENSRNOP00000040435"/>
<dbReference type="Ensembl" id="ENSRNOT00000048210.2">
    <property type="protein sequence ID" value="ENSRNOP00000040435.1"/>
    <property type="gene ID" value="ENSRNOG00000032448.2"/>
</dbReference>
<dbReference type="GeneID" id="100310879"/>
<dbReference type="KEGG" id="rno:100310879"/>
<dbReference type="UCSC" id="RGD:2314259">
    <property type="organism name" value="rat"/>
</dbReference>
<dbReference type="AGR" id="RGD:2314259"/>
<dbReference type="CTD" id="387340"/>
<dbReference type="RGD" id="2314259">
    <property type="gene designation" value="Tas2r104"/>
</dbReference>
<dbReference type="eggNOG" id="ENOG502T3AX">
    <property type="taxonomic scope" value="Eukaryota"/>
</dbReference>
<dbReference type="GeneTree" id="ENSGT01100000263477"/>
<dbReference type="HOGENOM" id="CLU_072337_3_0_1"/>
<dbReference type="InParanoid" id="Q67ES9"/>
<dbReference type="OMA" id="IANYSHC"/>
<dbReference type="OrthoDB" id="8876749at2759"/>
<dbReference type="PhylomeDB" id="Q67ES9"/>
<dbReference type="TreeFam" id="TF335891"/>
<dbReference type="PRO" id="PR:Q67ES9"/>
<dbReference type="Proteomes" id="UP000002494">
    <property type="component" value="Chromosome 4"/>
</dbReference>
<dbReference type="GO" id="GO:0016020">
    <property type="term" value="C:membrane"/>
    <property type="evidence" value="ECO:0000318"/>
    <property type="project" value="GO_Central"/>
</dbReference>
<dbReference type="GO" id="GO:0033038">
    <property type="term" value="F:bitter taste receptor activity"/>
    <property type="evidence" value="ECO:0007669"/>
    <property type="project" value="InterPro"/>
</dbReference>
<dbReference type="GO" id="GO:0004930">
    <property type="term" value="F:G protein-coupled receptor activity"/>
    <property type="evidence" value="ECO:0007669"/>
    <property type="project" value="UniProtKB-KW"/>
</dbReference>
<dbReference type="CDD" id="cd15021">
    <property type="entry name" value="7tm_TAS2R10"/>
    <property type="match status" value="1"/>
</dbReference>
<dbReference type="FunFam" id="1.20.1070.10:FF:000042">
    <property type="entry name" value="Taste receptor type 2 member 7"/>
    <property type="match status" value="1"/>
</dbReference>
<dbReference type="Gene3D" id="1.20.1070.10">
    <property type="entry name" value="Rhodopsin 7-helix transmembrane proteins"/>
    <property type="match status" value="1"/>
</dbReference>
<dbReference type="InterPro" id="IPR017452">
    <property type="entry name" value="GPCR_Rhodpsn_7TM"/>
</dbReference>
<dbReference type="InterPro" id="IPR007960">
    <property type="entry name" value="TAS2R"/>
</dbReference>
<dbReference type="PANTHER" id="PTHR11394">
    <property type="entry name" value="TASTE RECEPTOR TYPE 2"/>
    <property type="match status" value="1"/>
</dbReference>
<dbReference type="PANTHER" id="PTHR11394:SF30">
    <property type="entry name" value="TASTE RECEPTOR TYPE 2 MEMBER 104"/>
    <property type="match status" value="1"/>
</dbReference>
<dbReference type="Pfam" id="PF05296">
    <property type="entry name" value="TAS2R"/>
    <property type="match status" value="1"/>
</dbReference>
<dbReference type="SUPFAM" id="SSF81321">
    <property type="entry name" value="Family A G protein-coupled receptor-like"/>
    <property type="match status" value="1"/>
</dbReference>
<dbReference type="PROSITE" id="PS50262">
    <property type="entry name" value="G_PROTEIN_RECEP_F1_2"/>
    <property type="match status" value="1"/>
</dbReference>